<keyword id="KW-0028">Amino-acid biosynthesis</keyword>
<keyword id="KW-0963">Cytoplasm</keyword>
<keyword id="KW-0220">Diaminopimelate biosynthesis</keyword>
<keyword id="KW-0457">Lysine biosynthesis</keyword>
<keyword id="KW-0520">NAD</keyword>
<keyword id="KW-0521">NADP</keyword>
<keyword id="KW-0560">Oxidoreductase</keyword>
<keyword id="KW-1185">Reference proteome</keyword>
<gene>
    <name evidence="1" type="primary">dapB</name>
    <name type="ordered locus">Cla_1409</name>
</gene>
<organism>
    <name type="scientific">Campylobacter lari (strain RM2100 / D67 / ATCC BAA-1060)</name>
    <dbReference type="NCBI Taxonomy" id="306263"/>
    <lineage>
        <taxon>Bacteria</taxon>
        <taxon>Pseudomonadati</taxon>
        <taxon>Campylobacterota</taxon>
        <taxon>Epsilonproteobacteria</taxon>
        <taxon>Campylobacterales</taxon>
        <taxon>Campylobacteraceae</taxon>
        <taxon>Campylobacter</taxon>
    </lineage>
</organism>
<reference key="1">
    <citation type="journal article" date="2008" name="Foodborne Pathog. Dis.">
        <title>The complete genome sequence and analysis of the human pathogen Campylobacter lari.</title>
        <authorList>
            <person name="Miller W.G."/>
            <person name="Wang G."/>
            <person name="Binnewies T.T."/>
            <person name="Parker C.T."/>
        </authorList>
    </citation>
    <scope>NUCLEOTIDE SEQUENCE [LARGE SCALE GENOMIC DNA]</scope>
    <source>
        <strain>RM2100 / D67 / ATCC BAA-1060</strain>
    </source>
</reference>
<evidence type="ECO:0000255" key="1">
    <source>
        <dbReference type="HAMAP-Rule" id="MF_00102"/>
    </source>
</evidence>
<evidence type="ECO:0000305" key="2"/>
<proteinExistence type="inferred from homology"/>
<accession>B9KDT6</accession>
<comment type="function">
    <text evidence="1">Catalyzes the conversion of 4-hydroxy-tetrahydrodipicolinate (HTPA) to tetrahydrodipicolinate.</text>
</comment>
<comment type="catalytic activity">
    <reaction evidence="1">
        <text>(S)-2,3,4,5-tetrahydrodipicolinate + NAD(+) + H2O = (2S,4S)-4-hydroxy-2,3,4,5-tetrahydrodipicolinate + NADH + H(+)</text>
        <dbReference type="Rhea" id="RHEA:35323"/>
        <dbReference type="ChEBI" id="CHEBI:15377"/>
        <dbReference type="ChEBI" id="CHEBI:15378"/>
        <dbReference type="ChEBI" id="CHEBI:16845"/>
        <dbReference type="ChEBI" id="CHEBI:57540"/>
        <dbReference type="ChEBI" id="CHEBI:57945"/>
        <dbReference type="ChEBI" id="CHEBI:67139"/>
        <dbReference type="EC" id="1.17.1.8"/>
    </reaction>
</comment>
<comment type="catalytic activity">
    <reaction evidence="1">
        <text>(S)-2,3,4,5-tetrahydrodipicolinate + NADP(+) + H2O = (2S,4S)-4-hydroxy-2,3,4,5-tetrahydrodipicolinate + NADPH + H(+)</text>
        <dbReference type="Rhea" id="RHEA:35331"/>
        <dbReference type="ChEBI" id="CHEBI:15377"/>
        <dbReference type="ChEBI" id="CHEBI:15378"/>
        <dbReference type="ChEBI" id="CHEBI:16845"/>
        <dbReference type="ChEBI" id="CHEBI:57783"/>
        <dbReference type="ChEBI" id="CHEBI:58349"/>
        <dbReference type="ChEBI" id="CHEBI:67139"/>
        <dbReference type="EC" id="1.17.1.8"/>
    </reaction>
</comment>
<comment type="pathway">
    <text evidence="1">Amino-acid biosynthesis; L-lysine biosynthesis via DAP pathway; (S)-tetrahydrodipicolinate from L-aspartate: step 4/4.</text>
</comment>
<comment type="subcellular location">
    <subcellularLocation>
        <location evidence="1">Cytoplasm</location>
    </subcellularLocation>
</comment>
<comment type="similarity">
    <text evidence="1">Belongs to the DapB family.</text>
</comment>
<comment type="caution">
    <text evidence="2">Was originally thought to be a dihydrodipicolinate reductase (DHDPR), catalyzing the conversion of dihydrodipicolinate to tetrahydrodipicolinate. However, it was shown in E.coli that the substrate of the enzymatic reaction is not dihydrodipicolinate (DHDP) but in fact (2S,4S)-4-hydroxy-2,3,4,5-tetrahydrodipicolinic acid (HTPA), the product released by the DapA-catalyzed reaction.</text>
</comment>
<name>DAPB_CAMLR</name>
<sequence>MINIGIHGSNGRMGTQIRLCLEDDEQAKASAFFDQGSNYEDFFNKCDVIIDFSTPKGCEDLLLYARSNPKPLVIGTTGLDTKQNELMQSASITMPILYATNMSLGVAILKKLSYLASEALRDFDIEILEMHHNKKKDAPSGTAMTLAQNVAKARNLDLEKVRVSGRDGIIGQRSKDEIAVMSLRGGDIVGSHRVGFYNEGEFIELNHSATSRATFAKGAIKCAKWLVSQENGLYDIDDCLGI</sequence>
<dbReference type="EC" id="1.17.1.8" evidence="1"/>
<dbReference type="EMBL" id="CP000932">
    <property type="protein sequence ID" value="ACM64724.1"/>
    <property type="molecule type" value="Genomic_DNA"/>
</dbReference>
<dbReference type="RefSeq" id="WP_012662107.1">
    <property type="nucleotide sequence ID" value="NC_012039.1"/>
</dbReference>
<dbReference type="RefSeq" id="WP_012662108.1">
    <property type="nucleotide sequence ID" value="NC_012039.1"/>
</dbReference>
<dbReference type="SMR" id="B9KDT6"/>
<dbReference type="STRING" id="306263.Cla_1409"/>
<dbReference type="KEGG" id="cla:CLA_1409"/>
<dbReference type="PATRIC" id="fig|306263.5.peg.1395"/>
<dbReference type="eggNOG" id="COG0289">
    <property type="taxonomic scope" value="Bacteria"/>
</dbReference>
<dbReference type="HOGENOM" id="CLU_047479_2_1_7"/>
<dbReference type="UniPathway" id="UPA00034">
    <property type="reaction ID" value="UER00018"/>
</dbReference>
<dbReference type="Proteomes" id="UP000007727">
    <property type="component" value="Chromosome"/>
</dbReference>
<dbReference type="GO" id="GO:0005829">
    <property type="term" value="C:cytosol"/>
    <property type="evidence" value="ECO:0007669"/>
    <property type="project" value="TreeGrafter"/>
</dbReference>
<dbReference type="GO" id="GO:0008839">
    <property type="term" value="F:4-hydroxy-tetrahydrodipicolinate reductase"/>
    <property type="evidence" value="ECO:0007669"/>
    <property type="project" value="UniProtKB-EC"/>
</dbReference>
<dbReference type="GO" id="GO:0051287">
    <property type="term" value="F:NAD binding"/>
    <property type="evidence" value="ECO:0007669"/>
    <property type="project" value="UniProtKB-UniRule"/>
</dbReference>
<dbReference type="GO" id="GO:0050661">
    <property type="term" value="F:NADP binding"/>
    <property type="evidence" value="ECO:0007669"/>
    <property type="project" value="UniProtKB-UniRule"/>
</dbReference>
<dbReference type="GO" id="GO:0016726">
    <property type="term" value="F:oxidoreductase activity, acting on CH or CH2 groups, NAD or NADP as acceptor"/>
    <property type="evidence" value="ECO:0007669"/>
    <property type="project" value="UniProtKB-UniRule"/>
</dbReference>
<dbReference type="GO" id="GO:0019877">
    <property type="term" value="P:diaminopimelate biosynthetic process"/>
    <property type="evidence" value="ECO:0007669"/>
    <property type="project" value="UniProtKB-UniRule"/>
</dbReference>
<dbReference type="GO" id="GO:0009089">
    <property type="term" value="P:lysine biosynthetic process via diaminopimelate"/>
    <property type="evidence" value="ECO:0007669"/>
    <property type="project" value="UniProtKB-UniRule"/>
</dbReference>
<dbReference type="CDD" id="cd02274">
    <property type="entry name" value="DHDPR_N"/>
    <property type="match status" value="1"/>
</dbReference>
<dbReference type="FunFam" id="3.30.360.10:FF:000004">
    <property type="entry name" value="4-hydroxy-tetrahydrodipicolinate reductase"/>
    <property type="match status" value="1"/>
</dbReference>
<dbReference type="Gene3D" id="3.30.360.10">
    <property type="entry name" value="Dihydrodipicolinate Reductase, domain 2"/>
    <property type="match status" value="1"/>
</dbReference>
<dbReference type="Gene3D" id="3.40.50.720">
    <property type="entry name" value="NAD(P)-binding Rossmann-like Domain"/>
    <property type="match status" value="1"/>
</dbReference>
<dbReference type="HAMAP" id="MF_00102">
    <property type="entry name" value="DapB"/>
    <property type="match status" value="1"/>
</dbReference>
<dbReference type="InterPro" id="IPR022663">
    <property type="entry name" value="DapB_C"/>
</dbReference>
<dbReference type="InterPro" id="IPR000846">
    <property type="entry name" value="DapB_N"/>
</dbReference>
<dbReference type="InterPro" id="IPR022664">
    <property type="entry name" value="DapB_N_CS"/>
</dbReference>
<dbReference type="InterPro" id="IPR023940">
    <property type="entry name" value="DHDPR_bac"/>
</dbReference>
<dbReference type="InterPro" id="IPR036291">
    <property type="entry name" value="NAD(P)-bd_dom_sf"/>
</dbReference>
<dbReference type="NCBIfam" id="TIGR00036">
    <property type="entry name" value="dapB"/>
    <property type="match status" value="1"/>
</dbReference>
<dbReference type="PANTHER" id="PTHR20836:SF0">
    <property type="entry name" value="4-HYDROXY-TETRAHYDRODIPICOLINATE REDUCTASE 1, CHLOROPLASTIC-RELATED"/>
    <property type="match status" value="1"/>
</dbReference>
<dbReference type="PANTHER" id="PTHR20836">
    <property type="entry name" value="DIHYDRODIPICOLINATE REDUCTASE"/>
    <property type="match status" value="1"/>
</dbReference>
<dbReference type="Pfam" id="PF05173">
    <property type="entry name" value="DapB_C"/>
    <property type="match status" value="1"/>
</dbReference>
<dbReference type="Pfam" id="PF01113">
    <property type="entry name" value="DapB_N"/>
    <property type="match status" value="1"/>
</dbReference>
<dbReference type="PIRSF" id="PIRSF000161">
    <property type="entry name" value="DHPR"/>
    <property type="match status" value="1"/>
</dbReference>
<dbReference type="SUPFAM" id="SSF55347">
    <property type="entry name" value="Glyceraldehyde-3-phosphate dehydrogenase-like, C-terminal domain"/>
    <property type="match status" value="1"/>
</dbReference>
<dbReference type="SUPFAM" id="SSF51735">
    <property type="entry name" value="NAD(P)-binding Rossmann-fold domains"/>
    <property type="match status" value="1"/>
</dbReference>
<dbReference type="PROSITE" id="PS01298">
    <property type="entry name" value="DAPB"/>
    <property type="match status" value="1"/>
</dbReference>
<protein>
    <recommendedName>
        <fullName evidence="1">4-hydroxy-tetrahydrodipicolinate reductase</fullName>
        <shortName evidence="1">HTPA reductase</shortName>
        <ecNumber evidence="1">1.17.1.8</ecNumber>
    </recommendedName>
</protein>
<feature type="chain" id="PRO_1000118848" description="4-hydroxy-tetrahydrodipicolinate reductase">
    <location>
        <begin position="1"/>
        <end position="242"/>
    </location>
</feature>
<feature type="active site" description="Proton donor/acceptor" evidence="1">
    <location>
        <position position="131"/>
    </location>
</feature>
<feature type="active site" description="Proton donor" evidence="1">
    <location>
        <position position="135"/>
    </location>
</feature>
<feature type="binding site" evidence="1">
    <location>
        <begin position="8"/>
        <end position="13"/>
    </location>
    <ligand>
        <name>NAD(+)</name>
        <dbReference type="ChEBI" id="CHEBI:57540"/>
    </ligand>
</feature>
<feature type="binding site" evidence="1">
    <location>
        <begin position="75"/>
        <end position="77"/>
    </location>
    <ligand>
        <name>NAD(+)</name>
        <dbReference type="ChEBI" id="CHEBI:57540"/>
    </ligand>
</feature>
<feature type="binding site" evidence="1">
    <location>
        <begin position="99"/>
        <end position="102"/>
    </location>
    <ligand>
        <name>NAD(+)</name>
        <dbReference type="ChEBI" id="CHEBI:57540"/>
    </ligand>
</feature>
<feature type="binding site" evidence="1">
    <location>
        <position position="132"/>
    </location>
    <ligand>
        <name>(S)-2,3,4,5-tetrahydrodipicolinate</name>
        <dbReference type="ChEBI" id="CHEBI:16845"/>
    </ligand>
</feature>
<feature type="binding site" evidence="1">
    <location>
        <begin position="141"/>
        <end position="142"/>
    </location>
    <ligand>
        <name>(S)-2,3,4,5-tetrahydrodipicolinate</name>
        <dbReference type="ChEBI" id="CHEBI:16845"/>
    </ligand>
</feature>